<comment type="function">
    <text>Orphan nuclear receptor.</text>
</comment>
<comment type="subcellular location">
    <subcellularLocation>
        <location evidence="1">Nucleus</location>
    </subcellularLocation>
</comment>
<comment type="similarity">
    <text evidence="3">Belongs to the nuclear hormone receptor family.</text>
</comment>
<reference key="1">
    <citation type="journal article" date="1998" name="Science">
        <title>Genome sequence of the nematode C. elegans: a platform for investigating biology.</title>
        <authorList>
            <consortium name="The C. elegans sequencing consortium"/>
        </authorList>
    </citation>
    <scope>NUCLEOTIDE SEQUENCE [LARGE SCALE GENOMIC DNA]</scope>
    <source>
        <strain>Bristol N2</strain>
    </source>
</reference>
<reference key="2">
    <citation type="journal article" date="2005" name="J. Mol. Evol.">
        <title>Explosive lineage-specific expansion of the orphan nuclear receptor HNF4 in nematodes.</title>
        <authorList>
            <person name="Robinson-Rechavi M."/>
            <person name="Maina C.V."/>
            <person name="Gissendanner C.R."/>
            <person name="Laudet V."/>
            <person name="Sluder A."/>
        </authorList>
    </citation>
    <scope>NUCLEOTIDE SEQUENCE [MRNA] OF 151-422</scope>
</reference>
<proteinExistence type="evidence at transcript level"/>
<evidence type="ECO:0000255" key="1">
    <source>
        <dbReference type="PROSITE-ProRule" id="PRU00407"/>
    </source>
</evidence>
<evidence type="ECO:0000255" key="2">
    <source>
        <dbReference type="PROSITE-ProRule" id="PRU01189"/>
    </source>
</evidence>
<evidence type="ECO:0000305" key="3"/>
<accession>O45460</accession>
<accession>Q9GTF9</accession>
<name>NHR54_CAEEL</name>
<feature type="chain" id="PRO_0000053788" description="Nuclear hormone receptor family member nhr-54">
    <location>
        <begin position="1"/>
        <end position="422"/>
    </location>
</feature>
<feature type="domain" description="NR LBD" evidence="2">
    <location>
        <begin position="161"/>
        <end position="422"/>
    </location>
</feature>
<feature type="DNA-binding region" description="Nuclear receptor" evidence="1">
    <location>
        <begin position="14"/>
        <end position="92"/>
    </location>
</feature>
<feature type="zinc finger region" description="NR C4-type" evidence="1">
    <location>
        <begin position="17"/>
        <end position="37"/>
    </location>
</feature>
<feature type="zinc finger region" description="NR C4-type" evidence="1">
    <location>
        <begin position="53"/>
        <end position="80"/>
    </location>
</feature>
<protein>
    <recommendedName>
        <fullName>Nuclear hormone receptor family member nhr-54</fullName>
    </recommendedName>
</protein>
<dbReference type="EMBL" id="Z81531">
    <property type="protein sequence ID" value="CAB04316.1"/>
    <property type="molecule type" value="Genomic_DNA"/>
</dbReference>
<dbReference type="EMBL" id="AF273800">
    <property type="protein sequence ID" value="AAG15149.1"/>
    <property type="molecule type" value="mRNA"/>
</dbReference>
<dbReference type="PIR" id="T21850">
    <property type="entry name" value="T21850"/>
</dbReference>
<dbReference type="RefSeq" id="NP_507179.3">
    <property type="nucleotide sequence ID" value="NM_074778.4"/>
</dbReference>
<dbReference type="SMR" id="O45460"/>
<dbReference type="FunCoup" id="O45460">
    <property type="interactions" value="173"/>
</dbReference>
<dbReference type="STRING" id="6239.F36D3.2.1"/>
<dbReference type="PaxDb" id="6239-F36D3.2"/>
<dbReference type="EnsemblMetazoa" id="F36D3.2.1">
    <property type="protein sequence ID" value="F36D3.2.1"/>
    <property type="gene ID" value="WBGene00003644"/>
</dbReference>
<dbReference type="GeneID" id="180106"/>
<dbReference type="KEGG" id="cel:CELE_F36D3.2"/>
<dbReference type="UCSC" id="F36D3.2">
    <property type="organism name" value="c. elegans"/>
</dbReference>
<dbReference type="AGR" id="WB:WBGene00003644"/>
<dbReference type="CTD" id="180106"/>
<dbReference type="WormBase" id="F36D3.2">
    <property type="protein sequence ID" value="CE15966"/>
    <property type="gene ID" value="WBGene00003644"/>
    <property type="gene designation" value="nhr-54"/>
</dbReference>
<dbReference type="eggNOG" id="KOG3575">
    <property type="taxonomic scope" value="Eukaryota"/>
</dbReference>
<dbReference type="GeneTree" id="ENSGT00970000195937"/>
<dbReference type="HOGENOM" id="CLU_007368_7_0_1"/>
<dbReference type="InParanoid" id="O45460"/>
<dbReference type="OMA" id="SCCELID"/>
<dbReference type="OrthoDB" id="10018779at2759"/>
<dbReference type="PhylomeDB" id="O45460"/>
<dbReference type="PRO" id="PR:O45460"/>
<dbReference type="Proteomes" id="UP000001940">
    <property type="component" value="Chromosome V"/>
</dbReference>
<dbReference type="Bgee" id="WBGene00003644">
    <property type="expression patterns" value="Expressed in pharyngeal muscle cell (C elegans) and 3 other cell types or tissues"/>
</dbReference>
<dbReference type="GO" id="GO:0005634">
    <property type="term" value="C:nucleus"/>
    <property type="evidence" value="ECO:0007669"/>
    <property type="project" value="UniProtKB-SubCell"/>
</dbReference>
<dbReference type="GO" id="GO:0003700">
    <property type="term" value="F:DNA-binding transcription factor activity"/>
    <property type="evidence" value="ECO:0007669"/>
    <property type="project" value="InterPro"/>
</dbReference>
<dbReference type="GO" id="GO:0000978">
    <property type="term" value="F:RNA polymerase II cis-regulatory region sequence-specific DNA binding"/>
    <property type="evidence" value="ECO:0007669"/>
    <property type="project" value="InterPro"/>
</dbReference>
<dbReference type="GO" id="GO:0008270">
    <property type="term" value="F:zinc ion binding"/>
    <property type="evidence" value="ECO:0007669"/>
    <property type="project" value="UniProtKB-KW"/>
</dbReference>
<dbReference type="CDD" id="cd06960">
    <property type="entry name" value="NR_DBD_HNF4A"/>
    <property type="match status" value="1"/>
</dbReference>
<dbReference type="Gene3D" id="3.30.50.10">
    <property type="entry name" value="Erythroid Transcription Factor GATA-1, subunit A"/>
    <property type="match status" value="1"/>
</dbReference>
<dbReference type="Gene3D" id="1.10.565.10">
    <property type="entry name" value="Retinoid X Receptor"/>
    <property type="match status" value="1"/>
</dbReference>
<dbReference type="InterPro" id="IPR051152">
    <property type="entry name" value="C.elegans_Orphan_NR"/>
</dbReference>
<dbReference type="InterPro" id="IPR049636">
    <property type="entry name" value="HNF4-like_DBD"/>
</dbReference>
<dbReference type="InterPro" id="IPR035500">
    <property type="entry name" value="NHR-like_dom_sf"/>
</dbReference>
<dbReference type="InterPro" id="IPR000536">
    <property type="entry name" value="Nucl_hrmn_rcpt_lig-bd"/>
</dbReference>
<dbReference type="InterPro" id="IPR001628">
    <property type="entry name" value="Znf_hrmn_rcpt"/>
</dbReference>
<dbReference type="InterPro" id="IPR013088">
    <property type="entry name" value="Znf_NHR/GATA"/>
</dbReference>
<dbReference type="PANTHER" id="PTHR45680:SF31">
    <property type="entry name" value="NR LBD DOMAIN-CONTAINING PROTEIN-RELATED"/>
    <property type="match status" value="1"/>
</dbReference>
<dbReference type="PANTHER" id="PTHR45680">
    <property type="entry name" value="NUCLEAR HORMONE RECEPTOR FAMILY"/>
    <property type="match status" value="1"/>
</dbReference>
<dbReference type="Pfam" id="PF00104">
    <property type="entry name" value="Hormone_recep"/>
    <property type="match status" value="1"/>
</dbReference>
<dbReference type="Pfam" id="PF00105">
    <property type="entry name" value="zf-C4"/>
    <property type="match status" value="1"/>
</dbReference>
<dbReference type="PRINTS" id="PR00047">
    <property type="entry name" value="STROIDFINGER"/>
</dbReference>
<dbReference type="SMART" id="SM00430">
    <property type="entry name" value="HOLI"/>
    <property type="match status" value="1"/>
</dbReference>
<dbReference type="SMART" id="SM00399">
    <property type="entry name" value="ZnF_C4"/>
    <property type="match status" value="1"/>
</dbReference>
<dbReference type="SUPFAM" id="SSF57716">
    <property type="entry name" value="Glucocorticoid receptor-like (DNA-binding domain)"/>
    <property type="match status" value="1"/>
</dbReference>
<dbReference type="SUPFAM" id="SSF48508">
    <property type="entry name" value="Nuclear receptor ligand-binding domain"/>
    <property type="match status" value="1"/>
</dbReference>
<dbReference type="PROSITE" id="PS51843">
    <property type="entry name" value="NR_LBD"/>
    <property type="match status" value="1"/>
</dbReference>
<dbReference type="PROSITE" id="PS00031">
    <property type="entry name" value="NUCLEAR_REC_DBD_1"/>
    <property type="match status" value="1"/>
</dbReference>
<dbReference type="PROSITE" id="PS51030">
    <property type="entry name" value="NUCLEAR_REC_DBD_2"/>
    <property type="match status" value="1"/>
</dbReference>
<gene>
    <name type="primary">nhr-54</name>
    <name type="ORF">F36D3.2</name>
</gene>
<organism>
    <name type="scientific">Caenorhabditis elegans</name>
    <dbReference type="NCBI Taxonomy" id="6239"/>
    <lineage>
        <taxon>Eukaryota</taxon>
        <taxon>Metazoa</taxon>
        <taxon>Ecdysozoa</taxon>
        <taxon>Nematoda</taxon>
        <taxon>Chromadorea</taxon>
        <taxon>Rhabditida</taxon>
        <taxon>Rhabditina</taxon>
        <taxon>Rhabditomorpha</taxon>
        <taxon>Rhabditoidea</taxon>
        <taxon>Rhabditidae</taxon>
        <taxon>Peloderinae</taxon>
        <taxon>Caenorhabditis</taxon>
    </lineage>
</organism>
<sequence>MEIPSTSSEMTYFSVKCAICYKAGHGQHFGVETCRACAAFFRRTVVLNRKYKCTRKSGKCKIGSDETKDVMCKFCRFKKCIDLGMTTENVRTDQVINLNVEPSTSQSLVRLEMTSLQPETDDSNRVQYQIIHPRTRGPAILIDVNAIIKRSKTILETHFFPDDDVIVELNPLEKMTFCLRKLRSKQSWNPNFFTKINFLDLFEFWESQMEDTATWLMYSGEFRKLPNHEKIAIFKIVWAVWRRLERYTMTAQVFGQKCYDEQILLHSHQDAARFTDYDVDYSYITDQGFEKINGLFGGKMIQYFDIIVKPYLELELSDTEIAYILCQIVWNYAGRRLQGQTQAAGERFLEVISNNLHKYYEDKSGNRKRAEDKQNYVARLAKMMQIVNQMLNAQLKMENTMDVAMLFNTFNIVFTEPEFFRV</sequence>
<keyword id="KW-0238">DNA-binding</keyword>
<keyword id="KW-0479">Metal-binding</keyword>
<keyword id="KW-0539">Nucleus</keyword>
<keyword id="KW-0675">Receptor</keyword>
<keyword id="KW-1185">Reference proteome</keyword>
<keyword id="KW-0804">Transcription</keyword>
<keyword id="KW-0805">Transcription regulation</keyword>
<keyword id="KW-0862">Zinc</keyword>
<keyword id="KW-0863">Zinc-finger</keyword>